<protein>
    <recommendedName>
        <fullName evidence="1">Aminomethyltransferase</fullName>
        <ecNumber evidence="1">2.1.2.10</ecNumber>
    </recommendedName>
    <alternativeName>
        <fullName evidence="1">Glycine cleavage system T protein</fullName>
    </alternativeName>
</protein>
<evidence type="ECO:0000255" key="1">
    <source>
        <dbReference type="HAMAP-Rule" id="MF_00259"/>
    </source>
</evidence>
<keyword id="KW-0032">Aminotransferase</keyword>
<keyword id="KW-1185">Reference proteome</keyword>
<keyword id="KW-0808">Transferase</keyword>
<comment type="function">
    <text evidence="1">The glycine cleavage system catalyzes the degradation of glycine.</text>
</comment>
<comment type="catalytic activity">
    <reaction evidence="1">
        <text>N(6)-[(R)-S(8)-aminomethyldihydrolipoyl]-L-lysyl-[protein] + (6S)-5,6,7,8-tetrahydrofolate = N(6)-[(R)-dihydrolipoyl]-L-lysyl-[protein] + (6R)-5,10-methylene-5,6,7,8-tetrahydrofolate + NH4(+)</text>
        <dbReference type="Rhea" id="RHEA:16945"/>
        <dbReference type="Rhea" id="RHEA-COMP:10475"/>
        <dbReference type="Rhea" id="RHEA-COMP:10492"/>
        <dbReference type="ChEBI" id="CHEBI:15636"/>
        <dbReference type="ChEBI" id="CHEBI:28938"/>
        <dbReference type="ChEBI" id="CHEBI:57453"/>
        <dbReference type="ChEBI" id="CHEBI:83100"/>
        <dbReference type="ChEBI" id="CHEBI:83143"/>
        <dbReference type="EC" id="2.1.2.10"/>
    </reaction>
</comment>
<comment type="subunit">
    <text evidence="1">The glycine cleavage system is composed of four proteins: P, T, L and H.</text>
</comment>
<comment type="similarity">
    <text evidence="1">Belongs to the GcvT family.</text>
</comment>
<gene>
    <name evidence="1" type="primary">gcvT</name>
    <name type="ordered locus">ESA_00424</name>
</gene>
<sequence>MAQQTPLYEQHNLCGARMVDFHGWMMPLHYGSQIDEHHAVRNDAGMFDVSHMTIVDLRGARTREFLRYLLANDVAKLTQPGKALYTAMLNASGGVIDDLIVYFMTEDYFRLVVNSATREKDLAWINEHAEPYGVSVTVRDDLSLIAVQGPNAKAKAATLFTDAQRKATEGMKPFFGVQADDLFIATTGYTGEAGYEIAMPNEKAAGFWSQLVEAGVKPCGLGARDTLRLEAGMNLYGQEMDEGVSPLAANMGWTIAWQPEDRAFIGRDALEAQRENGTEQLVGLVMTEKGVLRGELPVRFTDDQGNAREGIITSGTFSPTLGYSIALARVPAGIGDTAIVQIRNREMPVKVTKPIFVRAGKPVTQ</sequence>
<reference key="1">
    <citation type="journal article" date="2010" name="PLoS ONE">
        <title>Genome sequence of Cronobacter sakazakii BAA-894 and comparative genomic hybridization analysis with other Cronobacter species.</title>
        <authorList>
            <person name="Kucerova E."/>
            <person name="Clifton S.W."/>
            <person name="Xia X.Q."/>
            <person name="Long F."/>
            <person name="Porwollik S."/>
            <person name="Fulton L."/>
            <person name="Fronick C."/>
            <person name="Minx P."/>
            <person name="Kyung K."/>
            <person name="Warren W."/>
            <person name="Fulton R."/>
            <person name="Feng D."/>
            <person name="Wollam A."/>
            <person name="Shah N."/>
            <person name="Bhonagiri V."/>
            <person name="Nash W.E."/>
            <person name="Hallsworth-Pepin K."/>
            <person name="Wilson R.K."/>
            <person name="McClelland M."/>
            <person name="Forsythe S.J."/>
        </authorList>
    </citation>
    <scope>NUCLEOTIDE SEQUENCE [LARGE SCALE GENOMIC DNA]</scope>
    <source>
        <strain>ATCC BAA-894</strain>
    </source>
</reference>
<accession>A7MR82</accession>
<feature type="chain" id="PRO_1000047663" description="Aminomethyltransferase">
    <location>
        <begin position="1"/>
        <end position="365"/>
    </location>
</feature>
<organism>
    <name type="scientific">Cronobacter sakazakii (strain ATCC BAA-894)</name>
    <name type="common">Enterobacter sakazakii</name>
    <dbReference type="NCBI Taxonomy" id="290339"/>
    <lineage>
        <taxon>Bacteria</taxon>
        <taxon>Pseudomonadati</taxon>
        <taxon>Pseudomonadota</taxon>
        <taxon>Gammaproteobacteria</taxon>
        <taxon>Enterobacterales</taxon>
        <taxon>Enterobacteriaceae</taxon>
        <taxon>Cronobacter</taxon>
    </lineage>
</organism>
<dbReference type="EC" id="2.1.2.10" evidence="1"/>
<dbReference type="EMBL" id="CP000783">
    <property type="protein sequence ID" value="ABU75721.1"/>
    <property type="molecule type" value="Genomic_DNA"/>
</dbReference>
<dbReference type="RefSeq" id="WP_012123847.1">
    <property type="nucleotide sequence ID" value="NC_009778.1"/>
</dbReference>
<dbReference type="SMR" id="A7MR82"/>
<dbReference type="KEGG" id="esa:ESA_00424"/>
<dbReference type="PATRIC" id="fig|290339.8.peg.387"/>
<dbReference type="HOGENOM" id="CLU_007884_10_2_6"/>
<dbReference type="Proteomes" id="UP000000260">
    <property type="component" value="Chromosome"/>
</dbReference>
<dbReference type="GO" id="GO:0005829">
    <property type="term" value="C:cytosol"/>
    <property type="evidence" value="ECO:0007669"/>
    <property type="project" value="TreeGrafter"/>
</dbReference>
<dbReference type="GO" id="GO:0005960">
    <property type="term" value="C:glycine cleavage complex"/>
    <property type="evidence" value="ECO:0007669"/>
    <property type="project" value="InterPro"/>
</dbReference>
<dbReference type="GO" id="GO:0004047">
    <property type="term" value="F:aminomethyltransferase activity"/>
    <property type="evidence" value="ECO:0007669"/>
    <property type="project" value="UniProtKB-UniRule"/>
</dbReference>
<dbReference type="GO" id="GO:0008483">
    <property type="term" value="F:transaminase activity"/>
    <property type="evidence" value="ECO:0007669"/>
    <property type="project" value="UniProtKB-KW"/>
</dbReference>
<dbReference type="GO" id="GO:0019464">
    <property type="term" value="P:glycine decarboxylation via glycine cleavage system"/>
    <property type="evidence" value="ECO:0007669"/>
    <property type="project" value="UniProtKB-UniRule"/>
</dbReference>
<dbReference type="FunFam" id="2.40.30.110:FF:000001">
    <property type="entry name" value="Aminomethyltransferase"/>
    <property type="match status" value="1"/>
</dbReference>
<dbReference type="FunFam" id="3.30.70.1400:FF:000001">
    <property type="entry name" value="Aminomethyltransferase"/>
    <property type="match status" value="1"/>
</dbReference>
<dbReference type="FunFam" id="4.10.1250.10:FF:000001">
    <property type="entry name" value="Aminomethyltransferase"/>
    <property type="match status" value="1"/>
</dbReference>
<dbReference type="Gene3D" id="2.40.30.110">
    <property type="entry name" value="Aminomethyltransferase beta-barrel domains"/>
    <property type="match status" value="1"/>
</dbReference>
<dbReference type="Gene3D" id="3.30.70.1400">
    <property type="entry name" value="Aminomethyltransferase beta-barrel domains"/>
    <property type="match status" value="1"/>
</dbReference>
<dbReference type="Gene3D" id="4.10.1250.10">
    <property type="entry name" value="Aminomethyltransferase fragment"/>
    <property type="match status" value="1"/>
</dbReference>
<dbReference type="Gene3D" id="3.30.1360.120">
    <property type="entry name" value="Probable tRNA modification gtpase trme, domain 1"/>
    <property type="match status" value="1"/>
</dbReference>
<dbReference type="HAMAP" id="MF_00259">
    <property type="entry name" value="GcvT"/>
    <property type="match status" value="1"/>
</dbReference>
<dbReference type="InterPro" id="IPR006223">
    <property type="entry name" value="GCS_T"/>
</dbReference>
<dbReference type="InterPro" id="IPR022903">
    <property type="entry name" value="GCS_T_bac"/>
</dbReference>
<dbReference type="InterPro" id="IPR013977">
    <property type="entry name" value="GCST_C"/>
</dbReference>
<dbReference type="InterPro" id="IPR006222">
    <property type="entry name" value="GCV_T_N"/>
</dbReference>
<dbReference type="InterPro" id="IPR028896">
    <property type="entry name" value="GcvT/YgfZ/DmdA"/>
</dbReference>
<dbReference type="InterPro" id="IPR029043">
    <property type="entry name" value="GcvT/YgfZ_C"/>
</dbReference>
<dbReference type="InterPro" id="IPR027266">
    <property type="entry name" value="TrmE/GcvT_dom1"/>
</dbReference>
<dbReference type="NCBIfam" id="TIGR00528">
    <property type="entry name" value="gcvT"/>
    <property type="match status" value="1"/>
</dbReference>
<dbReference type="NCBIfam" id="NF001567">
    <property type="entry name" value="PRK00389.1"/>
    <property type="match status" value="1"/>
</dbReference>
<dbReference type="PANTHER" id="PTHR43757">
    <property type="entry name" value="AMINOMETHYLTRANSFERASE"/>
    <property type="match status" value="1"/>
</dbReference>
<dbReference type="PANTHER" id="PTHR43757:SF2">
    <property type="entry name" value="AMINOMETHYLTRANSFERASE, MITOCHONDRIAL"/>
    <property type="match status" value="1"/>
</dbReference>
<dbReference type="Pfam" id="PF01571">
    <property type="entry name" value="GCV_T"/>
    <property type="match status" value="1"/>
</dbReference>
<dbReference type="Pfam" id="PF08669">
    <property type="entry name" value="GCV_T_C"/>
    <property type="match status" value="1"/>
</dbReference>
<dbReference type="PIRSF" id="PIRSF006487">
    <property type="entry name" value="GcvT"/>
    <property type="match status" value="1"/>
</dbReference>
<dbReference type="SUPFAM" id="SSF101790">
    <property type="entry name" value="Aminomethyltransferase beta-barrel domain"/>
    <property type="match status" value="1"/>
</dbReference>
<dbReference type="SUPFAM" id="SSF103025">
    <property type="entry name" value="Folate-binding domain"/>
    <property type="match status" value="1"/>
</dbReference>
<proteinExistence type="inferred from homology"/>
<name>GCST_CROS8</name>